<gene>
    <name evidence="1" type="primary">katG</name>
    <name type="ordered locus">ABBFA_003125</name>
</gene>
<dbReference type="EC" id="1.11.1.21" evidence="1"/>
<dbReference type="EMBL" id="CP001172">
    <property type="protein sequence ID" value="ACJ56986.1"/>
    <property type="molecule type" value="Genomic_DNA"/>
</dbReference>
<dbReference type="RefSeq" id="WP_000064284.1">
    <property type="nucleotide sequence ID" value="NZ_CP001172.1"/>
</dbReference>
<dbReference type="SMR" id="B7H0U3"/>
<dbReference type="HOGENOM" id="CLU_025424_2_0_6"/>
<dbReference type="Proteomes" id="UP000006924">
    <property type="component" value="Chromosome"/>
</dbReference>
<dbReference type="GO" id="GO:0005829">
    <property type="term" value="C:cytosol"/>
    <property type="evidence" value="ECO:0007669"/>
    <property type="project" value="TreeGrafter"/>
</dbReference>
<dbReference type="GO" id="GO:0004096">
    <property type="term" value="F:catalase activity"/>
    <property type="evidence" value="ECO:0007669"/>
    <property type="project" value="UniProtKB-UniRule"/>
</dbReference>
<dbReference type="GO" id="GO:0020037">
    <property type="term" value="F:heme binding"/>
    <property type="evidence" value="ECO:0007669"/>
    <property type="project" value="InterPro"/>
</dbReference>
<dbReference type="GO" id="GO:0046872">
    <property type="term" value="F:metal ion binding"/>
    <property type="evidence" value="ECO:0007669"/>
    <property type="project" value="UniProtKB-KW"/>
</dbReference>
<dbReference type="GO" id="GO:0070301">
    <property type="term" value="P:cellular response to hydrogen peroxide"/>
    <property type="evidence" value="ECO:0007669"/>
    <property type="project" value="TreeGrafter"/>
</dbReference>
<dbReference type="GO" id="GO:0042744">
    <property type="term" value="P:hydrogen peroxide catabolic process"/>
    <property type="evidence" value="ECO:0007669"/>
    <property type="project" value="UniProtKB-KW"/>
</dbReference>
<dbReference type="FunFam" id="1.10.420.10:FF:000002">
    <property type="entry name" value="Catalase-peroxidase"/>
    <property type="match status" value="1"/>
</dbReference>
<dbReference type="FunFam" id="1.10.420.10:FF:000004">
    <property type="entry name" value="Catalase-peroxidase"/>
    <property type="match status" value="1"/>
</dbReference>
<dbReference type="FunFam" id="1.10.520.10:FF:000002">
    <property type="entry name" value="Catalase-peroxidase"/>
    <property type="match status" value="1"/>
</dbReference>
<dbReference type="Gene3D" id="1.10.520.10">
    <property type="match status" value="2"/>
</dbReference>
<dbReference type="Gene3D" id="1.10.420.10">
    <property type="entry name" value="Peroxidase, domain 2"/>
    <property type="match status" value="2"/>
</dbReference>
<dbReference type="HAMAP" id="MF_01961">
    <property type="entry name" value="Catal_peroxid"/>
    <property type="match status" value="1"/>
</dbReference>
<dbReference type="InterPro" id="IPR000763">
    <property type="entry name" value="Catalase_peroxidase"/>
</dbReference>
<dbReference type="InterPro" id="IPR002016">
    <property type="entry name" value="Haem_peroxidase"/>
</dbReference>
<dbReference type="InterPro" id="IPR010255">
    <property type="entry name" value="Haem_peroxidase_sf"/>
</dbReference>
<dbReference type="InterPro" id="IPR019794">
    <property type="entry name" value="Peroxidases_AS"/>
</dbReference>
<dbReference type="NCBIfam" id="TIGR00198">
    <property type="entry name" value="cat_per_HPI"/>
    <property type="match status" value="1"/>
</dbReference>
<dbReference type="NCBIfam" id="NF011635">
    <property type="entry name" value="PRK15061.1"/>
    <property type="match status" value="1"/>
</dbReference>
<dbReference type="PANTHER" id="PTHR30555:SF0">
    <property type="entry name" value="CATALASE-PEROXIDASE"/>
    <property type="match status" value="1"/>
</dbReference>
<dbReference type="PANTHER" id="PTHR30555">
    <property type="entry name" value="HYDROPEROXIDASE I, BIFUNCTIONAL CATALASE-PEROXIDASE"/>
    <property type="match status" value="1"/>
</dbReference>
<dbReference type="Pfam" id="PF00141">
    <property type="entry name" value="peroxidase"/>
    <property type="match status" value="2"/>
</dbReference>
<dbReference type="PRINTS" id="PR00460">
    <property type="entry name" value="BPEROXIDASE"/>
</dbReference>
<dbReference type="PRINTS" id="PR00458">
    <property type="entry name" value="PEROXIDASE"/>
</dbReference>
<dbReference type="SUPFAM" id="SSF48113">
    <property type="entry name" value="Heme-dependent peroxidases"/>
    <property type="match status" value="2"/>
</dbReference>
<dbReference type="PROSITE" id="PS00436">
    <property type="entry name" value="PEROXIDASE_2"/>
    <property type="match status" value="1"/>
</dbReference>
<dbReference type="PROSITE" id="PS50873">
    <property type="entry name" value="PEROXIDASE_4"/>
    <property type="match status" value="1"/>
</dbReference>
<name>KATG_ACIB3</name>
<accession>B7H0U3</accession>
<reference key="1">
    <citation type="journal article" date="2008" name="J. Bacteriol.">
        <title>Comparative genome sequence analysis of multidrug-resistant Acinetobacter baumannii.</title>
        <authorList>
            <person name="Adams M.D."/>
            <person name="Goglin K."/>
            <person name="Molyneaux N."/>
            <person name="Hujer K.M."/>
            <person name="Lavender H."/>
            <person name="Jamison J.J."/>
            <person name="MacDonald I.J."/>
            <person name="Martin K.M."/>
            <person name="Russo T."/>
            <person name="Campagnari A.A."/>
            <person name="Hujer A.M."/>
            <person name="Bonomo R.A."/>
            <person name="Gill S.R."/>
        </authorList>
    </citation>
    <scope>NUCLEOTIDE SEQUENCE [LARGE SCALE GENOMIC DNA]</scope>
    <source>
        <strain>AB307-0294</strain>
    </source>
</reference>
<keyword id="KW-0349">Heme</keyword>
<keyword id="KW-0376">Hydrogen peroxide</keyword>
<keyword id="KW-0408">Iron</keyword>
<keyword id="KW-0479">Metal-binding</keyword>
<keyword id="KW-0560">Oxidoreductase</keyword>
<keyword id="KW-0575">Peroxidase</keyword>
<organism>
    <name type="scientific">Acinetobacter baumannii (strain AB307-0294)</name>
    <dbReference type="NCBI Taxonomy" id="557600"/>
    <lineage>
        <taxon>Bacteria</taxon>
        <taxon>Pseudomonadati</taxon>
        <taxon>Pseudomonadota</taxon>
        <taxon>Gammaproteobacteria</taxon>
        <taxon>Moraxellales</taxon>
        <taxon>Moraxellaceae</taxon>
        <taxon>Acinetobacter</taxon>
        <taxon>Acinetobacter calcoaceticus/baumannii complex</taxon>
    </lineage>
</organism>
<protein>
    <recommendedName>
        <fullName evidence="1">Catalase-peroxidase</fullName>
        <shortName evidence="1">CP</shortName>
        <ecNumber evidence="1">1.11.1.21</ecNumber>
    </recommendedName>
    <alternativeName>
        <fullName evidence="1">Peroxidase/catalase</fullName>
    </alternativeName>
</protein>
<proteinExistence type="inferred from homology"/>
<feature type="chain" id="PRO_1000216220" description="Catalase-peroxidase">
    <location>
        <begin position="1"/>
        <end position="718"/>
    </location>
</feature>
<feature type="active site" description="Proton acceptor" evidence="1">
    <location>
        <position position="99"/>
    </location>
</feature>
<feature type="binding site" description="axial binding residue" evidence="1">
    <location>
        <position position="260"/>
    </location>
    <ligand>
        <name>heme b</name>
        <dbReference type="ChEBI" id="CHEBI:60344"/>
    </ligand>
    <ligandPart>
        <name>Fe</name>
        <dbReference type="ChEBI" id="CHEBI:18248"/>
    </ligandPart>
</feature>
<feature type="site" description="Transition state stabilizer" evidence="1">
    <location>
        <position position="95"/>
    </location>
</feature>
<feature type="cross-link" description="Tryptophyl-tyrosyl-methioninium (Trp-Tyr) (with M-245)" evidence="1">
    <location>
        <begin position="98"/>
        <end position="219"/>
    </location>
</feature>
<feature type="cross-link" description="Tryptophyl-tyrosyl-methioninium (Tyr-Met) (with W-98)" evidence="1">
    <location>
        <begin position="219"/>
        <end position="245"/>
    </location>
</feature>
<evidence type="ECO:0000255" key="1">
    <source>
        <dbReference type="HAMAP-Rule" id="MF_01961"/>
    </source>
</evidence>
<sequence>MSNESKCPFSGHNSKPQVTVGGGTANLHWWPNQLRVDLLNQHSERSNPLGKDFNYRQEFKKLDYYALKADIKNVLTDSQDWWPADWGNYTGLFIRLAWHAAGTYRMGDGRGGAGRGQQRFAPLNSWPDNASLDKARRLLWPVKQKYGQKISWADLFILAGNIALESSGFRTFGFGAGREDVWEPDNDVNWGDEKEWLAHRNSEALAGSNLAATEMGLIYVNPEGPQASGDPRSAAPFIRATFGNMAMDDEEIVALIAGGHTLGKTHGAAPADHVQADPEGAPIEQMGFGWANSYGTGVGKDAITSGLEVIWSQTPTQWSNYFFENLFKYEWVQERSPAGAIQWVAADAEAIIPDPFDPSIKRKPTMLTTDLTLRFDPEFEKISRRFLNDPQAFANAFARAWFKLTHRDMGPKARYLGPEVPTEDLIWQDPLPAASATPSSASIADAKAKIVALGLPAGELVSLAWASASTFRGGDKRGGANGARIALSPQREWEVNKKAVETLTKIEELKASTQLSLADLIVLAGNVGVEQAAQAAGFNITVPFAPGRVDALQSQTDVESFQLLLGLADGFRNWKKQGVNTPAEVLLIDKAQQLTLTAPELTALIGGLRVLGTNWDGSQHGVFTQQVGVLSTDFFTNLLDMSNVWAPVDSTSEVFEGKDRKSGTVKFTATRNDLVFGSNSILRALAEVYAQADGKEKFVQDFVAAWTKVMNLDRFDLA</sequence>
<comment type="function">
    <text evidence="1">Bifunctional enzyme with both catalase and broad-spectrum peroxidase activity.</text>
</comment>
<comment type="catalytic activity">
    <reaction evidence="1">
        <text>H2O2 + AH2 = A + 2 H2O</text>
        <dbReference type="Rhea" id="RHEA:30275"/>
        <dbReference type="ChEBI" id="CHEBI:13193"/>
        <dbReference type="ChEBI" id="CHEBI:15377"/>
        <dbReference type="ChEBI" id="CHEBI:16240"/>
        <dbReference type="ChEBI" id="CHEBI:17499"/>
        <dbReference type="EC" id="1.11.1.21"/>
    </reaction>
</comment>
<comment type="catalytic activity">
    <reaction evidence="1">
        <text>2 H2O2 = O2 + 2 H2O</text>
        <dbReference type="Rhea" id="RHEA:20309"/>
        <dbReference type="ChEBI" id="CHEBI:15377"/>
        <dbReference type="ChEBI" id="CHEBI:15379"/>
        <dbReference type="ChEBI" id="CHEBI:16240"/>
        <dbReference type="EC" id="1.11.1.21"/>
    </reaction>
</comment>
<comment type="cofactor">
    <cofactor evidence="1">
        <name>heme b</name>
        <dbReference type="ChEBI" id="CHEBI:60344"/>
    </cofactor>
    <text evidence="1">Binds 1 heme b (iron(II)-protoporphyrin IX) group per dimer.</text>
</comment>
<comment type="subunit">
    <text evidence="1">Homodimer or homotetramer.</text>
</comment>
<comment type="PTM">
    <text evidence="1">Formation of the three residue Trp-Tyr-Met cross-link is important for the catalase, but not the peroxidase activity of the enzyme.</text>
</comment>
<comment type="similarity">
    <text evidence="1">Belongs to the peroxidase family. Peroxidase/catalase subfamily.</text>
</comment>